<proteinExistence type="evidence at protein level"/>
<comment type="function">
    <text evidence="3">Catalyzes the formation of isethionate from 2-sulfoacetaldehyde in the deaminative pathway of taurine. Constitutively expressed enzyme that only mediates a small part of the activity observed in taurine-grown cells.</text>
</comment>
<comment type="catalytic activity">
    <reaction evidence="3">
        <text>2-hydroxyethane-1-sulfonate + NADP(+) = sulfoacetaldehyde + NADPH + H(+)</text>
        <dbReference type="Rhea" id="RHEA:29591"/>
        <dbReference type="ChEBI" id="CHEBI:15378"/>
        <dbReference type="ChEBI" id="CHEBI:57783"/>
        <dbReference type="ChEBI" id="CHEBI:58246"/>
        <dbReference type="ChEBI" id="CHEBI:58349"/>
        <dbReference type="ChEBI" id="CHEBI:61904"/>
        <dbReference type="EC" id="1.1.1.313"/>
    </reaction>
</comment>
<comment type="pathway">
    <text>Organosulfur degradation.</text>
</comment>
<comment type="subunit">
    <text evidence="3">Homodimer and heterotetramer.</text>
</comment>
<comment type="induction">
    <text evidence="3">Constitutively expressed.</text>
</comment>
<comment type="similarity">
    <text evidence="4">Belongs to the short-chain dehydrogenases/reductases (SDR) family.</text>
</comment>
<sequence length="252" mass="27318">MSDIVLITGATSGFGRAAARRFADAGWSLILTGRREERLTELAEELSQRVRVHTAVLDVRDEKAVQSVIDELPEAFRRVKTLVNNAGLALAPQPAQDVDLADWHTMIDTNIKGLVNVTHAVLPTLIETGAGASIVNLGSVAGQWPYPGSHVYGASKAFVQQFTYNLRCDLQGTGVRVTDVAPGMAETEFTLVRTGGDQAASDALYRDTTPLQAEDVAELIFYTATLPAHVNVNRLEVMPTRQAWSAFAVDRD</sequence>
<dbReference type="EC" id="1.1.1.313"/>
<dbReference type="EMBL" id="CP000285">
    <property type="protein sequence ID" value="ABE60031.1"/>
    <property type="molecule type" value="Genomic_DNA"/>
</dbReference>
<dbReference type="RefSeq" id="WP_011507977.1">
    <property type="nucleotide sequence ID" value="NC_007963.1"/>
</dbReference>
<dbReference type="SMR" id="Q1QU27"/>
<dbReference type="STRING" id="290398.Csal_2684"/>
<dbReference type="GeneID" id="95335382"/>
<dbReference type="KEGG" id="csa:Csal_2684"/>
<dbReference type="eggNOG" id="COG4221">
    <property type="taxonomic scope" value="Bacteria"/>
</dbReference>
<dbReference type="HOGENOM" id="CLU_010194_2_10_6"/>
<dbReference type="OrthoDB" id="9810734at2"/>
<dbReference type="Proteomes" id="UP000000239">
    <property type="component" value="Chromosome"/>
</dbReference>
<dbReference type="GO" id="GO:0016491">
    <property type="term" value="F:oxidoreductase activity"/>
    <property type="evidence" value="ECO:0007669"/>
    <property type="project" value="UniProtKB-KW"/>
</dbReference>
<dbReference type="FunFam" id="3.40.50.720:FF:000047">
    <property type="entry name" value="NADP-dependent L-serine/L-allo-threonine dehydrogenase"/>
    <property type="match status" value="1"/>
</dbReference>
<dbReference type="Gene3D" id="3.40.50.720">
    <property type="entry name" value="NAD(P)-binding Rossmann-like Domain"/>
    <property type="match status" value="1"/>
</dbReference>
<dbReference type="InterPro" id="IPR036291">
    <property type="entry name" value="NAD(P)-bd_dom_sf"/>
</dbReference>
<dbReference type="InterPro" id="IPR020904">
    <property type="entry name" value="Sc_DH/Rdtase_CS"/>
</dbReference>
<dbReference type="InterPro" id="IPR002347">
    <property type="entry name" value="SDR_fam"/>
</dbReference>
<dbReference type="PANTHER" id="PTHR42901">
    <property type="entry name" value="ALCOHOL DEHYDROGENASE"/>
    <property type="match status" value="1"/>
</dbReference>
<dbReference type="PANTHER" id="PTHR42901:SF1">
    <property type="entry name" value="ALCOHOL DEHYDROGENASE"/>
    <property type="match status" value="1"/>
</dbReference>
<dbReference type="Pfam" id="PF00106">
    <property type="entry name" value="adh_short"/>
    <property type="match status" value="1"/>
</dbReference>
<dbReference type="PRINTS" id="PR00081">
    <property type="entry name" value="GDHRDH"/>
</dbReference>
<dbReference type="PRINTS" id="PR00080">
    <property type="entry name" value="SDRFAMILY"/>
</dbReference>
<dbReference type="SMART" id="SM00822">
    <property type="entry name" value="PKS_KR"/>
    <property type="match status" value="1"/>
</dbReference>
<dbReference type="SUPFAM" id="SSF51735">
    <property type="entry name" value="NAD(P)-binding Rossmann-fold domains"/>
    <property type="match status" value="1"/>
</dbReference>
<dbReference type="PROSITE" id="PS00061">
    <property type="entry name" value="ADH_SHORT"/>
    <property type="match status" value="1"/>
</dbReference>
<reference key="1">
    <citation type="journal article" date="2011" name="Stand. Genomic Sci.">
        <title>Complete genome sequence of the halophilic and highly halotolerant Chromohalobacter salexigens type strain (1H11(T)).</title>
        <authorList>
            <person name="Copeland A."/>
            <person name="O'Connor K."/>
            <person name="Lucas S."/>
            <person name="Lapidus A."/>
            <person name="Berry K.W."/>
            <person name="Detter J.C."/>
            <person name="Del Rio T.G."/>
            <person name="Hammon N."/>
            <person name="Dalin E."/>
            <person name="Tice H."/>
            <person name="Pitluck S."/>
            <person name="Bruce D."/>
            <person name="Goodwin L."/>
            <person name="Han C."/>
            <person name="Tapia R."/>
            <person name="Saunders E."/>
            <person name="Schmutz J."/>
            <person name="Brettin T."/>
            <person name="Larimer F."/>
            <person name="Land M."/>
            <person name="Hauser L."/>
            <person name="Vargas C."/>
            <person name="Nieto J.J."/>
            <person name="Kyrpides N.C."/>
            <person name="Ivanova N."/>
            <person name="Goker M."/>
            <person name="Klenk H.P."/>
            <person name="Csonka L.N."/>
            <person name="Woyke T."/>
        </authorList>
    </citation>
    <scope>NUCLEOTIDE SEQUENCE [LARGE SCALE GENOMIC DNA]</scope>
    <source>
        <strain>ATCC BAA-138 / DSM 3043 / CIP 106854 / NCIMB 13768 / 1H11</strain>
    </source>
</reference>
<reference key="2">
    <citation type="journal article" date="2010" name="Microbiology">
        <title>Isethionate formation from taurine in Chromohalobacter salexigens: purification of sulfoacetaldehyde reductase.</title>
        <authorList>
            <person name="Krejcik Z."/>
            <person name="Hollemeyer K."/>
            <person name="Smits T.H."/>
            <person name="Cook A.M."/>
        </authorList>
    </citation>
    <scope>FUNCTION</scope>
    <scope>CATALYTIC ACTIVITY</scope>
    <scope>SUBUNIT</scope>
    <scope>INDUCTION</scope>
    <source>
        <strain>ATCC BAA-138 / DSM 3043 / CIP 106854 / NCIMB 13768 / 1H11</strain>
    </source>
</reference>
<organism>
    <name type="scientific">Chromohalobacter salexigens (strain ATCC BAA-138 / DSM 3043 / CIP 106854 / NCIMB 13768 / 1H11)</name>
    <dbReference type="NCBI Taxonomy" id="290398"/>
    <lineage>
        <taxon>Bacteria</taxon>
        <taxon>Pseudomonadati</taxon>
        <taxon>Pseudomonadota</taxon>
        <taxon>Gammaproteobacteria</taxon>
        <taxon>Oceanospirillales</taxon>
        <taxon>Halomonadaceae</taxon>
        <taxon>Chromohalobacter</taxon>
    </lineage>
</organism>
<protein>
    <recommendedName>
        <fullName>Sulfoacetaldehyde reductase 2</fullName>
        <ecNumber>1.1.1.313</ecNumber>
    </recommendedName>
    <alternativeName>
        <fullName>Isethionate formation reductase 2</fullName>
    </alternativeName>
</protein>
<evidence type="ECO:0000250" key="1"/>
<evidence type="ECO:0000255" key="2">
    <source>
        <dbReference type="PROSITE-ProRule" id="PRU10001"/>
    </source>
</evidence>
<evidence type="ECO:0000269" key="3">
    <source>
    </source>
</evidence>
<evidence type="ECO:0000305" key="4"/>
<gene>
    <name type="primary">isfD2</name>
    <name type="ordered locus">Csal_2684</name>
</gene>
<accession>Q1QU27</accession>
<feature type="initiator methionine" description="Removed" evidence="1">
    <location>
        <position position="1"/>
    </location>
</feature>
<feature type="chain" id="PRO_0000418491" description="Sulfoacetaldehyde reductase 2">
    <location>
        <begin position="2"/>
        <end position="252"/>
    </location>
</feature>
<feature type="active site" description="Proton acceptor" evidence="2">
    <location>
        <position position="152"/>
    </location>
</feature>
<feature type="binding site" evidence="1">
    <location>
        <begin position="6"/>
        <end position="30"/>
    </location>
    <ligand>
        <name>NADP(+)</name>
        <dbReference type="ChEBI" id="CHEBI:58349"/>
    </ligand>
</feature>
<feature type="binding site" evidence="1">
    <location>
        <position position="139"/>
    </location>
    <ligand>
        <name>substrate</name>
    </ligand>
</feature>
<keyword id="KW-0521">NADP</keyword>
<keyword id="KW-0560">Oxidoreductase</keyword>
<keyword id="KW-1185">Reference proteome</keyword>
<name>ISFD2_CHRSD</name>